<name>PP391_ARATH</name>
<evidence type="ECO:0000255" key="1"/>
<evidence type="ECO:0000305" key="2"/>
<keyword id="KW-0496">Mitochondrion</keyword>
<keyword id="KW-1185">Reference proteome</keyword>
<keyword id="KW-0677">Repeat</keyword>
<keyword id="KW-0809">Transit peptide</keyword>
<organism>
    <name type="scientific">Arabidopsis thaliana</name>
    <name type="common">Mouse-ear cress</name>
    <dbReference type="NCBI Taxonomy" id="3702"/>
    <lineage>
        <taxon>Eukaryota</taxon>
        <taxon>Viridiplantae</taxon>
        <taxon>Streptophyta</taxon>
        <taxon>Embryophyta</taxon>
        <taxon>Tracheophyta</taxon>
        <taxon>Spermatophyta</taxon>
        <taxon>Magnoliopsida</taxon>
        <taxon>eudicotyledons</taxon>
        <taxon>Gunneridae</taxon>
        <taxon>Pentapetalae</taxon>
        <taxon>rosids</taxon>
        <taxon>malvids</taxon>
        <taxon>Brassicales</taxon>
        <taxon>Brassicaceae</taxon>
        <taxon>Camelineae</taxon>
        <taxon>Arabidopsis</taxon>
    </lineage>
</organism>
<accession>Q94JX6</accession>
<comment type="subcellular location">
    <subcellularLocation>
        <location evidence="2">Mitochondrion</location>
    </subcellularLocation>
</comment>
<comment type="similarity">
    <text evidence="2">Belongs to the PPR family. P subfamily.</text>
</comment>
<comment type="online information" name="Pentatricopeptide repeat proteins">
    <link uri="https://ppr.plantenergy.uwa.edu.au"/>
</comment>
<dbReference type="EMBL" id="AC051626">
    <property type="status" value="NOT_ANNOTATED_CDS"/>
    <property type="molecule type" value="Genomic_DNA"/>
</dbReference>
<dbReference type="EMBL" id="CP002688">
    <property type="protein sequence ID" value="AED92549.1"/>
    <property type="molecule type" value="Genomic_DNA"/>
</dbReference>
<dbReference type="EMBL" id="AF370559">
    <property type="protein sequence ID" value="AAK48986.1"/>
    <property type="molecule type" value="mRNA"/>
</dbReference>
<dbReference type="EMBL" id="BT002595">
    <property type="protein sequence ID" value="AAO00955.1"/>
    <property type="molecule type" value="mRNA"/>
</dbReference>
<dbReference type="RefSeq" id="NP_197340.1">
    <property type="nucleotide sequence ID" value="NM_121844.2"/>
</dbReference>
<dbReference type="SMR" id="Q94JX6"/>
<dbReference type="FunCoup" id="Q94JX6">
    <property type="interactions" value="1480"/>
</dbReference>
<dbReference type="PaxDb" id="3702-AT5G18390.1"/>
<dbReference type="ProteomicsDB" id="249272"/>
<dbReference type="EnsemblPlants" id="AT5G18390.1">
    <property type="protein sequence ID" value="AT5G18390.1"/>
    <property type="gene ID" value="AT5G18390"/>
</dbReference>
<dbReference type="GeneID" id="831957"/>
<dbReference type="Gramene" id="AT5G18390.1">
    <property type="protein sequence ID" value="AT5G18390.1"/>
    <property type="gene ID" value="AT5G18390"/>
</dbReference>
<dbReference type="KEGG" id="ath:AT5G18390"/>
<dbReference type="Araport" id="AT5G18390"/>
<dbReference type="TAIR" id="AT5G18390"/>
<dbReference type="eggNOG" id="KOG4197">
    <property type="taxonomic scope" value="Eukaryota"/>
</dbReference>
<dbReference type="HOGENOM" id="CLU_002706_49_0_1"/>
<dbReference type="InParanoid" id="Q94JX6"/>
<dbReference type="OMA" id="LVNAWCS"/>
<dbReference type="PhylomeDB" id="Q94JX6"/>
<dbReference type="PRO" id="PR:Q94JX6"/>
<dbReference type="Proteomes" id="UP000006548">
    <property type="component" value="Chromosome 5"/>
</dbReference>
<dbReference type="ExpressionAtlas" id="Q94JX6">
    <property type="expression patterns" value="baseline and differential"/>
</dbReference>
<dbReference type="GO" id="GO:0005739">
    <property type="term" value="C:mitochondrion"/>
    <property type="evidence" value="ECO:0007669"/>
    <property type="project" value="UniProtKB-SubCell"/>
</dbReference>
<dbReference type="GO" id="GO:0008380">
    <property type="term" value="P:RNA splicing"/>
    <property type="evidence" value="ECO:0007669"/>
    <property type="project" value="InterPro"/>
</dbReference>
<dbReference type="Gene3D" id="1.25.40.10">
    <property type="entry name" value="Tetratricopeptide repeat domain"/>
    <property type="match status" value="3"/>
</dbReference>
<dbReference type="InterPro" id="IPR044578">
    <property type="entry name" value="BIR6-like"/>
</dbReference>
<dbReference type="InterPro" id="IPR002885">
    <property type="entry name" value="Pentatricopeptide_rpt"/>
</dbReference>
<dbReference type="InterPro" id="IPR011990">
    <property type="entry name" value="TPR-like_helical_dom_sf"/>
</dbReference>
<dbReference type="NCBIfam" id="TIGR00756">
    <property type="entry name" value="PPR"/>
    <property type="match status" value="5"/>
</dbReference>
<dbReference type="PANTHER" id="PTHR47003">
    <property type="entry name" value="OS01G0970900 PROTEIN"/>
    <property type="match status" value="1"/>
</dbReference>
<dbReference type="PANTHER" id="PTHR47003:SF9">
    <property type="entry name" value="PENTACOTRIPEPTIDE-REPEAT REGION OF PRORP DOMAIN-CONTAINING PROTEIN"/>
    <property type="match status" value="1"/>
</dbReference>
<dbReference type="Pfam" id="PF01535">
    <property type="entry name" value="PPR"/>
    <property type="match status" value="2"/>
</dbReference>
<dbReference type="Pfam" id="PF12854">
    <property type="entry name" value="PPR_1"/>
    <property type="match status" value="1"/>
</dbReference>
<dbReference type="Pfam" id="PF13041">
    <property type="entry name" value="PPR_2"/>
    <property type="match status" value="2"/>
</dbReference>
<dbReference type="PROSITE" id="PS51375">
    <property type="entry name" value="PPR"/>
    <property type="match status" value="9"/>
</dbReference>
<protein>
    <recommendedName>
        <fullName>Pentatricopeptide repeat-containing protein At5g18390, mitochondrial</fullName>
    </recommendedName>
</protein>
<gene>
    <name type="ordered locus">At5g18390</name>
    <name type="ORF">F20L16_110</name>
</gene>
<feature type="transit peptide" description="Mitochondrion" evidence="1">
    <location>
        <begin position="1"/>
        <end position="7"/>
    </location>
</feature>
<feature type="chain" id="PRO_0000363528" description="Pentatricopeptide repeat-containing protein At5g18390, mitochondrial">
    <location>
        <begin position="8"/>
        <end position="459"/>
    </location>
</feature>
<feature type="repeat" description="PPR 1">
    <location>
        <begin position="110"/>
        <end position="144"/>
    </location>
</feature>
<feature type="repeat" description="PPR 2">
    <location>
        <begin position="145"/>
        <end position="175"/>
    </location>
</feature>
<feature type="repeat" description="PPR 3">
    <location>
        <begin position="181"/>
        <end position="215"/>
    </location>
</feature>
<feature type="repeat" description="PPR 4">
    <location>
        <begin position="216"/>
        <end position="250"/>
    </location>
</feature>
<feature type="repeat" description="PPR 5">
    <location>
        <begin position="251"/>
        <end position="285"/>
    </location>
</feature>
<feature type="repeat" description="PPR 6">
    <location>
        <begin position="286"/>
        <end position="320"/>
    </location>
</feature>
<feature type="repeat" description="PPR 7">
    <location>
        <begin position="321"/>
        <end position="355"/>
    </location>
</feature>
<feature type="repeat" description="PPR 8">
    <location>
        <begin position="356"/>
        <end position="390"/>
    </location>
</feature>
<feature type="repeat" description="PPR 9">
    <location>
        <begin position="391"/>
        <end position="425"/>
    </location>
</feature>
<proteinExistence type="evidence at transcript level"/>
<sequence length="459" mass="51770">MLLLRRYSGGSLYSILPIRASIESTIRHFNSLEPLQSSDSTPTKGDYFAAINHVVNIVRREIHPERSLNSLRLPVTSEFVFRVLRATSRSSNDSLRFFNWARSNPSYTPTSMEYEELAKSLASHKKYESMWKILKQMKDLSLDISGETLCFIIEQYGKNGHVDQAVELFNGVPKTLGCQQTVDVYNSLLHALCDVKMFHGAYALIRRMIRKGLKPDKRTYAILVNGWCSAGKMKEAQEFLDEMSRRGFNPPARGRDLLIEGLLNAGYLESAKEMVSKMTKGGFVPDIQTFNILIEAISKSGEVEFCIEMYYTACKLGLCVDIDTYKTLIPAVSKIGKIDEAFRLLNNCVEDGHKPFPSLYAPIIKGMCRNGMFDDAFSFFSDMKVKAHPPNRPVYTMLITMCGRGGKFVDAANYLVEMTEMGLVPISRCFDMVTDGLKNGGKHDLAMRIEQLEVQLRGV</sequence>
<reference key="1">
    <citation type="journal article" date="2000" name="Nature">
        <title>Sequence and analysis of chromosome 5 of the plant Arabidopsis thaliana.</title>
        <authorList>
            <person name="Tabata S."/>
            <person name="Kaneko T."/>
            <person name="Nakamura Y."/>
            <person name="Kotani H."/>
            <person name="Kato T."/>
            <person name="Asamizu E."/>
            <person name="Miyajima N."/>
            <person name="Sasamoto S."/>
            <person name="Kimura T."/>
            <person name="Hosouchi T."/>
            <person name="Kawashima K."/>
            <person name="Kohara M."/>
            <person name="Matsumoto M."/>
            <person name="Matsuno A."/>
            <person name="Muraki A."/>
            <person name="Nakayama S."/>
            <person name="Nakazaki N."/>
            <person name="Naruo K."/>
            <person name="Okumura S."/>
            <person name="Shinpo S."/>
            <person name="Takeuchi C."/>
            <person name="Wada T."/>
            <person name="Watanabe A."/>
            <person name="Yamada M."/>
            <person name="Yasuda M."/>
            <person name="Sato S."/>
            <person name="de la Bastide M."/>
            <person name="Huang E."/>
            <person name="Spiegel L."/>
            <person name="Gnoj L."/>
            <person name="O'Shaughnessy A."/>
            <person name="Preston R."/>
            <person name="Habermann K."/>
            <person name="Murray J."/>
            <person name="Johnson D."/>
            <person name="Rohlfing T."/>
            <person name="Nelson J."/>
            <person name="Stoneking T."/>
            <person name="Pepin K."/>
            <person name="Spieth J."/>
            <person name="Sekhon M."/>
            <person name="Armstrong J."/>
            <person name="Becker M."/>
            <person name="Belter E."/>
            <person name="Cordum H."/>
            <person name="Cordes M."/>
            <person name="Courtney L."/>
            <person name="Courtney W."/>
            <person name="Dante M."/>
            <person name="Du H."/>
            <person name="Edwards J."/>
            <person name="Fryman J."/>
            <person name="Haakensen B."/>
            <person name="Lamar E."/>
            <person name="Latreille P."/>
            <person name="Leonard S."/>
            <person name="Meyer R."/>
            <person name="Mulvaney E."/>
            <person name="Ozersky P."/>
            <person name="Riley A."/>
            <person name="Strowmatt C."/>
            <person name="Wagner-McPherson C."/>
            <person name="Wollam A."/>
            <person name="Yoakum M."/>
            <person name="Bell M."/>
            <person name="Dedhia N."/>
            <person name="Parnell L."/>
            <person name="Shah R."/>
            <person name="Rodriguez M."/>
            <person name="Hoon See L."/>
            <person name="Vil D."/>
            <person name="Baker J."/>
            <person name="Kirchoff K."/>
            <person name="Toth K."/>
            <person name="King L."/>
            <person name="Bahret A."/>
            <person name="Miller B."/>
            <person name="Marra M.A."/>
            <person name="Martienssen R."/>
            <person name="McCombie W.R."/>
            <person name="Wilson R.K."/>
            <person name="Murphy G."/>
            <person name="Bancroft I."/>
            <person name="Volckaert G."/>
            <person name="Wambutt R."/>
            <person name="Duesterhoeft A."/>
            <person name="Stiekema W."/>
            <person name="Pohl T."/>
            <person name="Entian K.-D."/>
            <person name="Terryn N."/>
            <person name="Hartley N."/>
            <person name="Bent E."/>
            <person name="Johnson S."/>
            <person name="Langham S.-A."/>
            <person name="McCullagh B."/>
            <person name="Robben J."/>
            <person name="Grymonprez B."/>
            <person name="Zimmermann W."/>
            <person name="Ramsperger U."/>
            <person name="Wedler H."/>
            <person name="Balke K."/>
            <person name="Wedler E."/>
            <person name="Peters S."/>
            <person name="van Staveren M."/>
            <person name="Dirkse W."/>
            <person name="Mooijman P."/>
            <person name="Klein Lankhorst R."/>
            <person name="Weitzenegger T."/>
            <person name="Bothe G."/>
            <person name="Rose M."/>
            <person name="Hauf J."/>
            <person name="Berneiser S."/>
            <person name="Hempel S."/>
            <person name="Feldpausch M."/>
            <person name="Lamberth S."/>
            <person name="Villarroel R."/>
            <person name="Gielen J."/>
            <person name="Ardiles W."/>
            <person name="Bents O."/>
            <person name="Lemcke K."/>
            <person name="Kolesov G."/>
            <person name="Mayer K.F.X."/>
            <person name="Rudd S."/>
            <person name="Schoof H."/>
            <person name="Schueller C."/>
            <person name="Zaccaria P."/>
            <person name="Mewes H.-W."/>
            <person name="Bevan M."/>
            <person name="Fransz P.F."/>
        </authorList>
    </citation>
    <scope>NUCLEOTIDE SEQUENCE [LARGE SCALE GENOMIC DNA]</scope>
    <source>
        <strain>cv. Columbia</strain>
    </source>
</reference>
<reference key="2">
    <citation type="journal article" date="2017" name="Plant J.">
        <title>Araport11: a complete reannotation of the Arabidopsis thaliana reference genome.</title>
        <authorList>
            <person name="Cheng C.Y."/>
            <person name="Krishnakumar V."/>
            <person name="Chan A.P."/>
            <person name="Thibaud-Nissen F."/>
            <person name="Schobel S."/>
            <person name="Town C.D."/>
        </authorList>
    </citation>
    <scope>GENOME REANNOTATION</scope>
    <source>
        <strain>cv. Columbia</strain>
    </source>
</reference>
<reference key="3">
    <citation type="journal article" date="2003" name="Science">
        <title>Empirical analysis of transcriptional activity in the Arabidopsis genome.</title>
        <authorList>
            <person name="Yamada K."/>
            <person name="Lim J."/>
            <person name="Dale J.M."/>
            <person name="Chen H."/>
            <person name="Shinn P."/>
            <person name="Palm C.J."/>
            <person name="Southwick A.M."/>
            <person name="Wu H.C."/>
            <person name="Kim C.J."/>
            <person name="Nguyen M."/>
            <person name="Pham P.K."/>
            <person name="Cheuk R.F."/>
            <person name="Karlin-Newmann G."/>
            <person name="Liu S.X."/>
            <person name="Lam B."/>
            <person name="Sakano H."/>
            <person name="Wu T."/>
            <person name="Yu G."/>
            <person name="Miranda M."/>
            <person name="Quach H.L."/>
            <person name="Tripp M."/>
            <person name="Chang C.H."/>
            <person name="Lee J.M."/>
            <person name="Toriumi M.J."/>
            <person name="Chan M.M."/>
            <person name="Tang C.C."/>
            <person name="Onodera C.S."/>
            <person name="Deng J.M."/>
            <person name="Akiyama K."/>
            <person name="Ansari Y."/>
            <person name="Arakawa T."/>
            <person name="Banh J."/>
            <person name="Banno F."/>
            <person name="Bowser L."/>
            <person name="Brooks S.Y."/>
            <person name="Carninci P."/>
            <person name="Chao Q."/>
            <person name="Choy N."/>
            <person name="Enju A."/>
            <person name="Goldsmith A.D."/>
            <person name="Gurjal M."/>
            <person name="Hansen N.F."/>
            <person name="Hayashizaki Y."/>
            <person name="Johnson-Hopson C."/>
            <person name="Hsuan V.W."/>
            <person name="Iida K."/>
            <person name="Karnes M."/>
            <person name="Khan S."/>
            <person name="Koesema E."/>
            <person name="Ishida J."/>
            <person name="Jiang P.X."/>
            <person name="Jones T."/>
            <person name="Kawai J."/>
            <person name="Kamiya A."/>
            <person name="Meyers C."/>
            <person name="Nakajima M."/>
            <person name="Narusaka M."/>
            <person name="Seki M."/>
            <person name="Sakurai T."/>
            <person name="Satou M."/>
            <person name="Tamse R."/>
            <person name="Vaysberg M."/>
            <person name="Wallender E.K."/>
            <person name="Wong C."/>
            <person name="Yamamura Y."/>
            <person name="Yuan S."/>
            <person name="Shinozaki K."/>
            <person name="Davis R.W."/>
            <person name="Theologis A."/>
            <person name="Ecker J.R."/>
        </authorList>
    </citation>
    <scope>NUCLEOTIDE SEQUENCE [LARGE SCALE MRNA] OF 274-459</scope>
    <source>
        <strain>cv. Columbia</strain>
    </source>
</reference>
<reference key="4">
    <citation type="journal article" date="2004" name="Plant Cell">
        <title>Genome-wide analysis of Arabidopsis pentatricopeptide repeat proteins reveals their essential role in organelle biogenesis.</title>
        <authorList>
            <person name="Lurin C."/>
            <person name="Andres C."/>
            <person name="Aubourg S."/>
            <person name="Bellaoui M."/>
            <person name="Bitton F."/>
            <person name="Bruyere C."/>
            <person name="Caboche M."/>
            <person name="Debast C."/>
            <person name="Gualberto J."/>
            <person name="Hoffmann B."/>
            <person name="Lecharny A."/>
            <person name="Le Ret M."/>
            <person name="Martin-Magniette M.-L."/>
            <person name="Mireau H."/>
            <person name="Peeters N."/>
            <person name="Renou J.-P."/>
            <person name="Szurek B."/>
            <person name="Taconnat L."/>
            <person name="Small I."/>
        </authorList>
    </citation>
    <scope>GENE FAMILY</scope>
</reference>